<name>NUOB_NOVAD</name>
<reference key="1">
    <citation type="submission" date="2006-01" db="EMBL/GenBank/DDBJ databases">
        <title>Complete sequence of Novosphingobium aromaticivorans DSM 12444.</title>
        <authorList>
            <consortium name="US DOE Joint Genome Institute"/>
            <person name="Copeland A."/>
            <person name="Lucas S."/>
            <person name="Lapidus A."/>
            <person name="Barry K."/>
            <person name="Detter J.C."/>
            <person name="Glavina T."/>
            <person name="Hammon N."/>
            <person name="Israni S."/>
            <person name="Pitluck S."/>
            <person name="Chain P."/>
            <person name="Malfatti S."/>
            <person name="Shin M."/>
            <person name="Vergez L."/>
            <person name="Schmutz J."/>
            <person name="Larimer F."/>
            <person name="Land M."/>
            <person name="Kyrpides N."/>
            <person name="Ivanova N."/>
            <person name="Fredrickson J."/>
            <person name="Balkwill D."/>
            <person name="Romine M.F."/>
            <person name="Richardson P."/>
        </authorList>
    </citation>
    <scope>NUCLEOTIDE SEQUENCE [LARGE SCALE GENOMIC DNA]</scope>
    <source>
        <strain>ATCC 700278 / DSM 12444 / CCUG 56034 / CIP 105152 / NBRC 16084 / F199</strain>
    </source>
</reference>
<proteinExistence type="inferred from homology"/>
<dbReference type="EC" id="7.1.1.-" evidence="2"/>
<dbReference type="EMBL" id="CP000248">
    <property type="protein sequence ID" value="ABD26739.1"/>
    <property type="molecule type" value="Genomic_DNA"/>
</dbReference>
<dbReference type="RefSeq" id="WP_011445945.1">
    <property type="nucleotide sequence ID" value="NC_007794.1"/>
</dbReference>
<dbReference type="SMR" id="Q2G5Y4"/>
<dbReference type="STRING" id="279238.Saro_2302"/>
<dbReference type="KEGG" id="nar:Saro_2302"/>
<dbReference type="eggNOG" id="COG0377">
    <property type="taxonomic scope" value="Bacteria"/>
</dbReference>
<dbReference type="HOGENOM" id="CLU_055737_7_0_5"/>
<dbReference type="Proteomes" id="UP000009134">
    <property type="component" value="Chromosome"/>
</dbReference>
<dbReference type="GO" id="GO:0005886">
    <property type="term" value="C:plasma membrane"/>
    <property type="evidence" value="ECO:0007669"/>
    <property type="project" value="UniProtKB-SubCell"/>
</dbReference>
<dbReference type="GO" id="GO:0045271">
    <property type="term" value="C:respiratory chain complex I"/>
    <property type="evidence" value="ECO:0007669"/>
    <property type="project" value="TreeGrafter"/>
</dbReference>
<dbReference type="GO" id="GO:0051539">
    <property type="term" value="F:4 iron, 4 sulfur cluster binding"/>
    <property type="evidence" value="ECO:0007669"/>
    <property type="project" value="UniProtKB-KW"/>
</dbReference>
<dbReference type="GO" id="GO:0005506">
    <property type="term" value="F:iron ion binding"/>
    <property type="evidence" value="ECO:0007669"/>
    <property type="project" value="UniProtKB-UniRule"/>
</dbReference>
<dbReference type="GO" id="GO:0008137">
    <property type="term" value="F:NADH dehydrogenase (ubiquinone) activity"/>
    <property type="evidence" value="ECO:0007669"/>
    <property type="project" value="InterPro"/>
</dbReference>
<dbReference type="GO" id="GO:0050136">
    <property type="term" value="F:NADH:ubiquinone reductase (non-electrogenic) activity"/>
    <property type="evidence" value="ECO:0007669"/>
    <property type="project" value="UniProtKB-UniRule"/>
</dbReference>
<dbReference type="GO" id="GO:0048038">
    <property type="term" value="F:quinone binding"/>
    <property type="evidence" value="ECO:0007669"/>
    <property type="project" value="UniProtKB-KW"/>
</dbReference>
<dbReference type="GO" id="GO:0009060">
    <property type="term" value="P:aerobic respiration"/>
    <property type="evidence" value="ECO:0007669"/>
    <property type="project" value="TreeGrafter"/>
</dbReference>
<dbReference type="GO" id="GO:0015990">
    <property type="term" value="P:electron transport coupled proton transport"/>
    <property type="evidence" value="ECO:0007669"/>
    <property type="project" value="TreeGrafter"/>
</dbReference>
<dbReference type="FunFam" id="3.40.50.12280:FF:000001">
    <property type="entry name" value="NADH-quinone oxidoreductase subunit B 2"/>
    <property type="match status" value="1"/>
</dbReference>
<dbReference type="Gene3D" id="3.40.50.12280">
    <property type="match status" value="1"/>
</dbReference>
<dbReference type="HAMAP" id="MF_01356">
    <property type="entry name" value="NDH1_NuoB"/>
    <property type="match status" value="1"/>
</dbReference>
<dbReference type="InterPro" id="IPR006137">
    <property type="entry name" value="NADH_UbQ_OxRdtase-like_20kDa"/>
</dbReference>
<dbReference type="InterPro" id="IPR006138">
    <property type="entry name" value="NADH_UQ_OxRdtase_20Kd_su"/>
</dbReference>
<dbReference type="NCBIfam" id="TIGR01957">
    <property type="entry name" value="nuoB_fam"/>
    <property type="match status" value="1"/>
</dbReference>
<dbReference type="NCBIfam" id="NF005012">
    <property type="entry name" value="PRK06411.1"/>
    <property type="match status" value="1"/>
</dbReference>
<dbReference type="PANTHER" id="PTHR11995">
    <property type="entry name" value="NADH DEHYDROGENASE"/>
    <property type="match status" value="1"/>
</dbReference>
<dbReference type="PANTHER" id="PTHR11995:SF14">
    <property type="entry name" value="NADH DEHYDROGENASE [UBIQUINONE] IRON-SULFUR PROTEIN 7, MITOCHONDRIAL"/>
    <property type="match status" value="1"/>
</dbReference>
<dbReference type="Pfam" id="PF01058">
    <property type="entry name" value="Oxidored_q6"/>
    <property type="match status" value="1"/>
</dbReference>
<dbReference type="SUPFAM" id="SSF56770">
    <property type="entry name" value="HydA/Nqo6-like"/>
    <property type="match status" value="1"/>
</dbReference>
<dbReference type="PROSITE" id="PS01150">
    <property type="entry name" value="COMPLEX1_20K"/>
    <property type="match status" value="1"/>
</dbReference>
<evidence type="ECO:0000250" key="1"/>
<evidence type="ECO:0000255" key="2">
    <source>
        <dbReference type="HAMAP-Rule" id="MF_01356"/>
    </source>
</evidence>
<gene>
    <name evidence="2" type="primary">nuoB</name>
    <name type="ordered locus">Saro_2302</name>
</gene>
<keyword id="KW-0004">4Fe-4S</keyword>
<keyword id="KW-0997">Cell inner membrane</keyword>
<keyword id="KW-1003">Cell membrane</keyword>
<keyword id="KW-0408">Iron</keyword>
<keyword id="KW-0411">Iron-sulfur</keyword>
<keyword id="KW-0472">Membrane</keyword>
<keyword id="KW-0479">Metal-binding</keyword>
<keyword id="KW-0520">NAD</keyword>
<keyword id="KW-0874">Quinone</keyword>
<keyword id="KW-1185">Reference proteome</keyword>
<keyword id="KW-1278">Translocase</keyword>
<keyword id="KW-0813">Transport</keyword>
<keyword id="KW-0830">Ubiquinone</keyword>
<accession>Q2G5Y4</accession>
<protein>
    <recommendedName>
        <fullName evidence="2">NADH-quinone oxidoreductase subunit B</fullName>
        <ecNumber evidence="2">7.1.1.-</ecNumber>
    </recommendedName>
    <alternativeName>
        <fullName evidence="2">NADH dehydrogenase I subunit B</fullName>
    </alternativeName>
    <alternativeName>
        <fullName evidence="2">NDH-1 subunit B</fullName>
    </alternativeName>
</protein>
<feature type="chain" id="PRO_0000358437" description="NADH-quinone oxidoreductase subunit B">
    <location>
        <begin position="1"/>
        <end position="181"/>
    </location>
</feature>
<feature type="binding site" evidence="2">
    <location>
        <position position="60"/>
    </location>
    <ligand>
        <name>[4Fe-4S] cluster</name>
        <dbReference type="ChEBI" id="CHEBI:49883"/>
    </ligand>
</feature>
<feature type="binding site" evidence="2">
    <location>
        <position position="61"/>
    </location>
    <ligand>
        <name>[4Fe-4S] cluster</name>
        <dbReference type="ChEBI" id="CHEBI:49883"/>
    </ligand>
</feature>
<feature type="binding site" evidence="2">
    <location>
        <position position="125"/>
    </location>
    <ligand>
        <name>[4Fe-4S] cluster</name>
        <dbReference type="ChEBI" id="CHEBI:49883"/>
    </ligand>
</feature>
<feature type="binding site" evidence="2">
    <location>
        <position position="155"/>
    </location>
    <ligand>
        <name>[4Fe-4S] cluster</name>
        <dbReference type="ChEBI" id="CHEBI:49883"/>
    </ligand>
</feature>
<sequence>MTASPLVTADQGAVAAPDQAFFDSLNAEVNDKGFLVTSTEELFQWARTGSLWWMTFGLACCAVEMIHVNMPRYDMERFGVAPRASPRQSDVMIVAGTLCNKMAPALRKVYDQMSDPKYVISMGSCANGGGYYHYSYSVVRGCDRIVPVDIYVPGCPPTAEALLYGVMQLQRKIRRAGTLER</sequence>
<organism>
    <name type="scientific">Novosphingobium aromaticivorans (strain ATCC 700278 / DSM 12444 / CCUG 56034 / CIP 105152 / NBRC 16084 / F199)</name>
    <dbReference type="NCBI Taxonomy" id="279238"/>
    <lineage>
        <taxon>Bacteria</taxon>
        <taxon>Pseudomonadati</taxon>
        <taxon>Pseudomonadota</taxon>
        <taxon>Alphaproteobacteria</taxon>
        <taxon>Sphingomonadales</taxon>
        <taxon>Sphingomonadaceae</taxon>
        <taxon>Novosphingobium</taxon>
    </lineage>
</organism>
<comment type="function">
    <text evidence="1">NDH-1 shuttles electrons from NADH, via FMN and iron-sulfur (Fe-S) centers, to quinones in the respiratory chain. Couples the redox reaction to proton translocation (for every two electrons transferred, four hydrogen ions are translocated across the cytoplasmic membrane), and thus conserves the redox energy in a proton gradient (By similarity).</text>
</comment>
<comment type="catalytic activity">
    <reaction evidence="2">
        <text>a quinone + NADH + 5 H(+)(in) = a quinol + NAD(+) + 4 H(+)(out)</text>
        <dbReference type="Rhea" id="RHEA:57888"/>
        <dbReference type="ChEBI" id="CHEBI:15378"/>
        <dbReference type="ChEBI" id="CHEBI:24646"/>
        <dbReference type="ChEBI" id="CHEBI:57540"/>
        <dbReference type="ChEBI" id="CHEBI:57945"/>
        <dbReference type="ChEBI" id="CHEBI:132124"/>
    </reaction>
</comment>
<comment type="cofactor">
    <cofactor evidence="2">
        <name>[4Fe-4S] cluster</name>
        <dbReference type="ChEBI" id="CHEBI:49883"/>
    </cofactor>
    <text evidence="2">Binds 1 [4Fe-4S] cluster.</text>
</comment>
<comment type="subunit">
    <text evidence="2">NDH-1 is composed of 14 different subunits. Subunits NuoB, C, D, E, F, and G constitute the peripheral sector of the complex.</text>
</comment>
<comment type="subcellular location">
    <subcellularLocation>
        <location evidence="2">Cell inner membrane</location>
        <topology evidence="2">Peripheral membrane protein</topology>
        <orientation evidence="2">Cytoplasmic side</orientation>
    </subcellularLocation>
</comment>
<comment type="similarity">
    <text evidence="2">Belongs to the complex I 20 kDa subunit family.</text>
</comment>